<keyword id="KW-0067">ATP-binding</keyword>
<keyword id="KW-0119">Carbohydrate metabolism</keyword>
<keyword id="KW-0418">Kinase</keyword>
<keyword id="KW-0511">Multifunctional enzyme</keyword>
<keyword id="KW-0547">Nucleotide-binding</keyword>
<keyword id="KW-0548">Nucleotidyltransferase</keyword>
<keyword id="KW-0808">Transferase</keyword>
<name>HLDE_SALEP</name>
<protein>
    <recommendedName>
        <fullName evidence="1">Bifunctional protein HldE</fullName>
    </recommendedName>
    <domain>
        <recommendedName>
            <fullName evidence="1">D-beta-D-heptose 7-phosphate kinase</fullName>
            <ecNumber evidence="1">2.7.1.167</ecNumber>
        </recommendedName>
        <alternativeName>
            <fullName evidence="1">D-beta-D-heptose 7-phosphotransferase</fullName>
        </alternativeName>
        <alternativeName>
            <fullName evidence="1">D-glycero-beta-D-manno-heptose-7-phosphate kinase</fullName>
        </alternativeName>
    </domain>
    <domain>
        <recommendedName>
            <fullName evidence="1">D-beta-D-heptose 1-phosphate adenylyltransferase</fullName>
            <ecNumber evidence="1">2.7.7.70</ecNumber>
        </recommendedName>
        <alternativeName>
            <fullName evidence="1">D-glycero-beta-D-manno-heptose 1-phosphate adenylyltransferase</fullName>
        </alternativeName>
    </domain>
</protein>
<feature type="chain" id="PRO_1000185816" description="Bifunctional protein HldE">
    <location>
        <begin position="1"/>
        <end position="477"/>
    </location>
</feature>
<feature type="region of interest" description="Ribokinase">
    <location>
        <begin position="1"/>
        <end position="318"/>
    </location>
</feature>
<feature type="region of interest" description="Cytidylyltransferase">
    <location>
        <begin position="344"/>
        <end position="477"/>
    </location>
</feature>
<feature type="active site" evidence="1">
    <location>
        <position position="264"/>
    </location>
</feature>
<feature type="binding site" evidence="1">
    <location>
        <begin position="195"/>
        <end position="198"/>
    </location>
    <ligand>
        <name>ATP</name>
        <dbReference type="ChEBI" id="CHEBI:30616"/>
    </ligand>
</feature>
<sequence>MKVNLPAFERAGVMVVGDVMLDRYWYGPTCRISPEAPVPVVKVNTVEERPGGAANVAMNIASLGANARLVGLTGIDDAARALSKTLAEVNVKCDFVSVPTHPTITKLRVLSRNQQLIRLDFEEGFEGVDPQPLHERINQALGSIGALVLSDYAKGALTSVQTMISLARQAGVPVLIDPKGTDFERYRGATLLTPNLSEFEAVAGKCKSEDELVERGMKLIADYDLSALLVTRSEQGMTLLQPNKAPLHMPTQAQEVYDVTGAGDTVIGVLAATLAAGNTLEEACYFANAAAGVVVGKLGTSTVSPIELENAVRGRADTGFGVMTEEELRQAVASARKRGEKVVMTNGVFDILHAGHVSYLANARKLGDRLIVAVNSDASTKRLKGDSRPVNPLEQRMIVLGALESVDWVVSFEEDTPQRLIAGILPDLLVKGGDYKPEEIAGSEEVWANGGEVMVLNFEDGCSTTNIIKKIQTESEK</sequence>
<reference key="1">
    <citation type="journal article" date="2008" name="Genome Res.">
        <title>Comparative genome analysis of Salmonella enteritidis PT4 and Salmonella gallinarum 287/91 provides insights into evolutionary and host adaptation pathways.</title>
        <authorList>
            <person name="Thomson N.R."/>
            <person name="Clayton D.J."/>
            <person name="Windhorst D."/>
            <person name="Vernikos G."/>
            <person name="Davidson S."/>
            <person name="Churcher C."/>
            <person name="Quail M.A."/>
            <person name="Stevens M."/>
            <person name="Jones M.A."/>
            <person name="Watson M."/>
            <person name="Barron A."/>
            <person name="Layton A."/>
            <person name="Pickard D."/>
            <person name="Kingsley R.A."/>
            <person name="Bignell A."/>
            <person name="Clark L."/>
            <person name="Harris B."/>
            <person name="Ormond D."/>
            <person name="Abdellah Z."/>
            <person name="Brooks K."/>
            <person name="Cherevach I."/>
            <person name="Chillingworth T."/>
            <person name="Woodward J."/>
            <person name="Norberczak H."/>
            <person name="Lord A."/>
            <person name="Arrowsmith C."/>
            <person name="Jagels K."/>
            <person name="Moule S."/>
            <person name="Mungall K."/>
            <person name="Saunders M."/>
            <person name="Whitehead S."/>
            <person name="Chabalgoity J.A."/>
            <person name="Maskell D."/>
            <person name="Humphreys T."/>
            <person name="Roberts M."/>
            <person name="Barrow P.A."/>
            <person name="Dougan G."/>
            <person name="Parkhill J."/>
        </authorList>
    </citation>
    <scope>NUCLEOTIDE SEQUENCE [LARGE SCALE GENOMIC DNA]</scope>
    <source>
        <strain>P125109</strain>
    </source>
</reference>
<gene>
    <name evidence="1" type="primary">hldE</name>
    <name type="ordered locus">SEN3042</name>
</gene>
<accession>B5QZ36</accession>
<dbReference type="EC" id="2.7.1.167" evidence="1"/>
<dbReference type="EC" id="2.7.7.70" evidence="1"/>
<dbReference type="EMBL" id="AM933172">
    <property type="protein sequence ID" value="CAR34618.1"/>
    <property type="molecule type" value="Genomic_DNA"/>
</dbReference>
<dbReference type="RefSeq" id="WP_000867680.1">
    <property type="nucleotide sequence ID" value="NC_011294.1"/>
</dbReference>
<dbReference type="SMR" id="B5QZ36"/>
<dbReference type="KEGG" id="set:SEN3042"/>
<dbReference type="HOGENOM" id="CLU_021150_2_1_6"/>
<dbReference type="UniPathway" id="UPA00356">
    <property type="reaction ID" value="UER00437"/>
</dbReference>
<dbReference type="UniPathway" id="UPA00356">
    <property type="reaction ID" value="UER00439"/>
</dbReference>
<dbReference type="Proteomes" id="UP000000613">
    <property type="component" value="Chromosome"/>
</dbReference>
<dbReference type="GO" id="GO:0005829">
    <property type="term" value="C:cytosol"/>
    <property type="evidence" value="ECO:0007669"/>
    <property type="project" value="TreeGrafter"/>
</dbReference>
<dbReference type="GO" id="GO:0005524">
    <property type="term" value="F:ATP binding"/>
    <property type="evidence" value="ECO:0007669"/>
    <property type="project" value="UniProtKB-UniRule"/>
</dbReference>
<dbReference type="GO" id="GO:0033785">
    <property type="term" value="F:heptose 7-phosphate kinase activity"/>
    <property type="evidence" value="ECO:0007669"/>
    <property type="project" value="UniProtKB-UniRule"/>
</dbReference>
<dbReference type="GO" id="GO:0033786">
    <property type="term" value="F:heptose-1-phosphate adenylyltransferase activity"/>
    <property type="evidence" value="ECO:0007669"/>
    <property type="project" value="UniProtKB-UniRule"/>
</dbReference>
<dbReference type="GO" id="GO:0016773">
    <property type="term" value="F:phosphotransferase activity, alcohol group as acceptor"/>
    <property type="evidence" value="ECO:0007669"/>
    <property type="project" value="InterPro"/>
</dbReference>
<dbReference type="GO" id="GO:0097171">
    <property type="term" value="P:ADP-L-glycero-beta-D-manno-heptose biosynthetic process"/>
    <property type="evidence" value="ECO:0007669"/>
    <property type="project" value="UniProtKB-UniPathway"/>
</dbReference>
<dbReference type="CDD" id="cd01172">
    <property type="entry name" value="RfaE_like"/>
    <property type="match status" value="1"/>
</dbReference>
<dbReference type="FunFam" id="3.40.1190.20:FF:000002">
    <property type="entry name" value="Bifunctional protein HldE"/>
    <property type="match status" value="1"/>
</dbReference>
<dbReference type="FunFam" id="3.40.50.620:FF:000028">
    <property type="entry name" value="Bifunctional protein HldE"/>
    <property type="match status" value="1"/>
</dbReference>
<dbReference type="Gene3D" id="3.40.1190.20">
    <property type="match status" value="1"/>
</dbReference>
<dbReference type="Gene3D" id="3.40.50.620">
    <property type="entry name" value="HUPs"/>
    <property type="match status" value="1"/>
</dbReference>
<dbReference type="HAMAP" id="MF_01603">
    <property type="entry name" value="HldE"/>
    <property type="match status" value="1"/>
</dbReference>
<dbReference type="InterPro" id="IPR023030">
    <property type="entry name" value="Bifunc_HldE"/>
</dbReference>
<dbReference type="InterPro" id="IPR002173">
    <property type="entry name" value="Carboh/pur_kinase_PfkB_CS"/>
</dbReference>
<dbReference type="InterPro" id="IPR004821">
    <property type="entry name" value="Cyt_trans-like"/>
</dbReference>
<dbReference type="InterPro" id="IPR011611">
    <property type="entry name" value="PfkB_dom"/>
</dbReference>
<dbReference type="InterPro" id="IPR011913">
    <property type="entry name" value="RfaE_dom_I"/>
</dbReference>
<dbReference type="InterPro" id="IPR011914">
    <property type="entry name" value="RfaE_dom_II"/>
</dbReference>
<dbReference type="InterPro" id="IPR029056">
    <property type="entry name" value="Ribokinase-like"/>
</dbReference>
<dbReference type="InterPro" id="IPR014729">
    <property type="entry name" value="Rossmann-like_a/b/a_fold"/>
</dbReference>
<dbReference type="NCBIfam" id="TIGR00125">
    <property type="entry name" value="cyt_tran_rel"/>
    <property type="match status" value="1"/>
</dbReference>
<dbReference type="NCBIfam" id="NF008454">
    <property type="entry name" value="PRK11316.1"/>
    <property type="match status" value="1"/>
</dbReference>
<dbReference type="NCBIfam" id="TIGR02198">
    <property type="entry name" value="rfaE_dom_I"/>
    <property type="match status" value="1"/>
</dbReference>
<dbReference type="NCBIfam" id="TIGR02199">
    <property type="entry name" value="rfaE_dom_II"/>
    <property type="match status" value="1"/>
</dbReference>
<dbReference type="PANTHER" id="PTHR46969">
    <property type="entry name" value="BIFUNCTIONAL PROTEIN HLDE"/>
    <property type="match status" value="1"/>
</dbReference>
<dbReference type="PANTHER" id="PTHR46969:SF1">
    <property type="entry name" value="BIFUNCTIONAL PROTEIN HLDE"/>
    <property type="match status" value="1"/>
</dbReference>
<dbReference type="Pfam" id="PF01467">
    <property type="entry name" value="CTP_transf_like"/>
    <property type="match status" value="1"/>
</dbReference>
<dbReference type="Pfam" id="PF00294">
    <property type="entry name" value="PfkB"/>
    <property type="match status" value="1"/>
</dbReference>
<dbReference type="SUPFAM" id="SSF52374">
    <property type="entry name" value="Nucleotidylyl transferase"/>
    <property type="match status" value="1"/>
</dbReference>
<dbReference type="SUPFAM" id="SSF53613">
    <property type="entry name" value="Ribokinase-like"/>
    <property type="match status" value="1"/>
</dbReference>
<dbReference type="PROSITE" id="PS00583">
    <property type="entry name" value="PFKB_KINASES_1"/>
    <property type="match status" value="1"/>
</dbReference>
<proteinExistence type="inferred from homology"/>
<evidence type="ECO:0000255" key="1">
    <source>
        <dbReference type="HAMAP-Rule" id="MF_01603"/>
    </source>
</evidence>
<comment type="function">
    <text evidence="1">Catalyzes the phosphorylation of D-glycero-D-manno-heptose 7-phosphate at the C-1 position to selectively form D-glycero-beta-D-manno-heptose-1,7-bisphosphate.</text>
</comment>
<comment type="function">
    <text evidence="1">Catalyzes the ADP transfer from ATP to D-glycero-beta-D-manno-heptose 1-phosphate, yielding ADP-D-glycero-beta-D-manno-heptose.</text>
</comment>
<comment type="catalytic activity">
    <reaction evidence="1">
        <text>D-glycero-beta-D-manno-heptose 7-phosphate + ATP = D-glycero-beta-D-manno-heptose 1,7-bisphosphate + ADP + H(+)</text>
        <dbReference type="Rhea" id="RHEA:27473"/>
        <dbReference type="ChEBI" id="CHEBI:15378"/>
        <dbReference type="ChEBI" id="CHEBI:30616"/>
        <dbReference type="ChEBI" id="CHEBI:60204"/>
        <dbReference type="ChEBI" id="CHEBI:60208"/>
        <dbReference type="ChEBI" id="CHEBI:456216"/>
        <dbReference type="EC" id="2.7.1.167"/>
    </reaction>
</comment>
<comment type="catalytic activity">
    <reaction evidence="1">
        <text>D-glycero-beta-D-manno-heptose 1-phosphate + ATP + H(+) = ADP-D-glycero-beta-D-manno-heptose + diphosphate</text>
        <dbReference type="Rhea" id="RHEA:27465"/>
        <dbReference type="ChEBI" id="CHEBI:15378"/>
        <dbReference type="ChEBI" id="CHEBI:30616"/>
        <dbReference type="ChEBI" id="CHEBI:33019"/>
        <dbReference type="ChEBI" id="CHEBI:59967"/>
        <dbReference type="ChEBI" id="CHEBI:61593"/>
        <dbReference type="EC" id="2.7.7.70"/>
    </reaction>
</comment>
<comment type="pathway">
    <text evidence="1">Nucleotide-sugar biosynthesis; ADP-L-glycero-beta-D-manno-heptose biosynthesis; ADP-L-glycero-beta-D-manno-heptose from D-glycero-beta-D-manno-heptose 7-phosphate: step 1/4.</text>
</comment>
<comment type="pathway">
    <text evidence="1">Nucleotide-sugar biosynthesis; ADP-L-glycero-beta-D-manno-heptose biosynthesis; ADP-L-glycero-beta-D-manno-heptose from D-glycero-beta-D-manno-heptose 7-phosphate: step 3/4.</text>
</comment>
<comment type="subunit">
    <text evidence="1">Homodimer.</text>
</comment>
<comment type="similarity">
    <text evidence="1">In the N-terminal section; belongs to the carbohydrate kinase PfkB family.</text>
</comment>
<comment type="similarity">
    <text evidence="1">In the C-terminal section; belongs to the cytidylyltransferase family.</text>
</comment>
<organism>
    <name type="scientific">Salmonella enteritidis PT4 (strain P125109)</name>
    <dbReference type="NCBI Taxonomy" id="550537"/>
    <lineage>
        <taxon>Bacteria</taxon>
        <taxon>Pseudomonadati</taxon>
        <taxon>Pseudomonadota</taxon>
        <taxon>Gammaproteobacteria</taxon>
        <taxon>Enterobacterales</taxon>
        <taxon>Enterobacteriaceae</taxon>
        <taxon>Salmonella</taxon>
    </lineage>
</organism>